<keyword id="KW-0002">3D-structure</keyword>
<keyword id="KW-0025">Alternative splicing</keyword>
<keyword id="KW-0344">Guanine-nucleotide releasing factor</keyword>
<keyword id="KW-0539">Nucleus</keyword>
<keyword id="KW-1267">Proteomics identification</keyword>
<keyword id="KW-1185">Reference proteome</keyword>
<reference key="1">
    <citation type="journal article" date="1996" name="DNA Res.">
        <title>Prediction of the coding sequences of unidentified human genes. VI. The coding sequences of 80 new genes (KIAA0201-KIAA0280) deduced by analysis of cDNA clones from cell line KG-1 and brain.</title>
        <authorList>
            <person name="Nagase T."/>
            <person name="Seki N."/>
            <person name="Ishikawa K."/>
            <person name="Ohira M."/>
            <person name="Kawarabayasi Y."/>
            <person name="Ohara O."/>
            <person name="Tanaka A."/>
            <person name="Kotani H."/>
            <person name="Miyajima N."/>
            <person name="Nomura N."/>
        </authorList>
    </citation>
    <scope>NUCLEOTIDE SEQUENCE [LARGE SCALE MRNA] (ISOFORM 1)</scope>
    <source>
        <tissue>Brain</tissue>
    </source>
</reference>
<reference key="2">
    <citation type="journal article" date="2003" name="Science">
        <title>Human chromosome 7: DNA sequence and biology.</title>
        <authorList>
            <person name="Scherer S.W."/>
            <person name="Cheung J."/>
            <person name="MacDonald J.R."/>
            <person name="Osborne L.R."/>
            <person name="Nakabayashi K."/>
            <person name="Herbrick J.-A."/>
            <person name="Carson A.R."/>
            <person name="Parker-Katiraee L."/>
            <person name="Skaug J."/>
            <person name="Khaja R."/>
            <person name="Zhang J."/>
            <person name="Hudek A.K."/>
            <person name="Li M."/>
            <person name="Haddad M."/>
            <person name="Duggan G.E."/>
            <person name="Fernandez B.A."/>
            <person name="Kanematsu E."/>
            <person name="Gentles S."/>
            <person name="Christopoulos C.C."/>
            <person name="Choufani S."/>
            <person name="Kwasnicka D."/>
            <person name="Zheng X.H."/>
            <person name="Lai Z."/>
            <person name="Nusskern D.R."/>
            <person name="Zhang Q."/>
            <person name="Gu Z."/>
            <person name="Lu F."/>
            <person name="Zeesman S."/>
            <person name="Nowaczyk M.J."/>
            <person name="Teshima I."/>
            <person name="Chitayat D."/>
            <person name="Shuman C."/>
            <person name="Weksberg R."/>
            <person name="Zackai E.H."/>
            <person name="Grebe T.A."/>
            <person name="Cox S.R."/>
            <person name="Kirkpatrick S.J."/>
            <person name="Rahman N."/>
            <person name="Friedman J.M."/>
            <person name="Heng H.H.Q."/>
            <person name="Pelicci P.G."/>
            <person name="Lo-Coco F."/>
            <person name="Belloni E."/>
            <person name="Shaffer L.G."/>
            <person name="Pober B."/>
            <person name="Morton C.C."/>
            <person name="Gusella J.F."/>
            <person name="Bruns G.A.P."/>
            <person name="Korf B.R."/>
            <person name="Quade B.J."/>
            <person name="Ligon A.H."/>
            <person name="Ferguson H."/>
            <person name="Higgins A.W."/>
            <person name="Leach N.T."/>
            <person name="Herrick S.R."/>
            <person name="Lemyre E."/>
            <person name="Farra C.G."/>
            <person name="Kim H.-G."/>
            <person name="Summers A.M."/>
            <person name="Gripp K.W."/>
            <person name="Roberts W."/>
            <person name="Szatmari P."/>
            <person name="Winsor E.J.T."/>
            <person name="Grzeschik K.-H."/>
            <person name="Teebi A."/>
            <person name="Minassian B.A."/>
            <person name="Kere J."/>
            <person name="Armengol L."/>
            <person name="Pujana M.A."/>
            <person name="Estivill X."/>
            <person name="Wilson M.D."/>
            <person name="Koop B.F."/>
            <person name="Tosi S."/>
            <person name="Moore G.E."/>
            <person name="Boright A.P."/>
            <person name="Zlotorynski E."/>
            <person name="Kerem B."/>
            <person name="Kroisel P.M."/>
            <person name="Petek E."/>
            <person name="Oscier D.G."/>
            <person name="Mould S.J."/>
            <person name="Doehner H."/>
            <person name="Doehner K."/>
            <person name="Rommens J.M."/>
            <person name="Vincent J.B."/>
            <person name="Venter J.C."/>
            <person name="Li P.W."/>
            <person name="Mural R.J."/>
            <person name="Adams M.D."/>
            <person name="Tsui L.-C."/>
        </authorList>
    </citation>
    <scope>NUCLEOTIDE SEQUENCE [LARGE SCALE GENOMIC DNA]</scope>
</reference>
<reference key="3">
    <citation type="journal article" date="2004" name="Genome Res.">
        <title>The status, quality, and expansion of the NIH full-length cDNA project: the Mammalian Gene Collection (MGC).</title>
        <authorList>
            <consortium name="The MGC Project Team"/>
        </authorList>
    </citation>
    <scope>NUCLEOTIDE SEQUENCE [LARGE SCALE MRNA] (ISOFORM 2)</scope>
    <source>
        <tissue>Brain</tissue>
    </source>
</reference>
<reference key="4">
    <citation type="journal article" date="1999" name="FEBS Lett.">
        <title>Characterization of GFR, a novel guanine nucleotide exchange factor for Rap1.</title>
        <authorList>
            <person name="Ichiba T."/>
            <person name="Hoshi Y."/>
            <person name="Eto Y."/>
            <person name="Tajima N."/>
            <person name="Kuraishi Y."/>
        </authorList>
    </citation>
    <scope>CHARACTERIZATION</scope>
</reference>
<reference key="5">
    <citation type="journal article" date="2000" name="J. Biol. Chem.">
        <title>Mechanism of regulation of the Epac family of cAMP-dependent RapGEFs.</title>
        <authorList>
            <person name="de Rooij J."/>
            <person name="Rehmann H."/>
            <person name="van Triest M."/>
            <person name="Cool R.H."/>
            <person name="Wittinghofer A."/>
            <person name="Bos J.L."/>
        </authorList>
    </citation>
    <scope>FUNCTION</scope>
</reference>
<reference key="6">
    <citation type="journal article" date="2000" name="J. Biol. Chem.">
        <title>Identification of guanine nucleotide exchange factors (GEFs) for the Rap1 GTPase. Regulation of MR-GEF by M-Ras-GTP interaction.</title>
        <authorList>
            <person name="Rebhun J.F."/>
            <person name="Castro A.F."/>
            <person name="Quilliam L.A."/>
        </authorList>
    </citation>
    <scope>FUNCTION AS A MRAS EFFECTOR</scope>
</reference>
<reference key="7">
    <citation type="submission" date="2004-11" db="PDB data bank">
        <title>RA domain of guanine nucleotide exchange factor for RAP1.</title>
        <authorList>
            <consortium name="RIKEN structural genomics initiative (RSGI)"/>
        </authorList>
    </citation>
    <scope>STRUCTURE BY NMR OF 241-331</scope>
</reference>
<feature type="chain" id="PRO_0000068873" description="Rap guanine nucleotide exchange factor 5">
    <location>
        <begin position="1"/>
        <end position="580"/>
    </location>
</feature>
<feature type="domain" description="N-terminal Ras-GEF" evidence="1">
    <location>
        <begin position="68"/>
        <end position="201"/>
    </location>
</feature>
<feature type="domain" description="Ras-GEF" evidence="2">
    <location>
        <begin position="345"/>
        <end position="579"/>
    </location>
</feature>
<feature type="splice variant" id="VSP_007616" description="In isoform 2." evidence="5">
    <location>
        <begin position="270"/>
        <end position="405"/>
    </location>
</feature>
<feature type="sequence conflict" description="In Ref. 3; AAH39203." evidence="6" ref="3">
    <original>M</original>
    <variation>V</variation>
    <location>
        <position position="497"/>
    </location>
</feature>
<feature type="strand" evidence="7">
    <location>
        <begin position="245"/>
        <end position="248"/>
    </location>
</feature>
<feature type="strand" evidence="7">
    <location>
        <begin position="250"/>
        <end position="252"/>
    </location>
</feature>
<feature type="strand" evidence="7">
    <location>
        <begin position="254"/>
        <end position="257"/>
    </location>
</feature>
<feature type="helix" evidence="7">
    <location>
        <begin position="266"/>
        <end position="276"/>
    </location>
</feature>
<feature type="helix" evidence="7">
    <location>
        <begin position="280"/>
        <end position="282"/>
    </location>
</feature>
<feature type="strand" evidence="7">
    <location>
        <begin position="283"/>
        <end position="288"/>
    </location>
</feature>
<feature type="strand" evidence="7">
    <location>
        <begin position="301"/>
        <end position="304"/>
    </location>
</feature>
<feature type="strand" evidence="7">
    <location>
        <begin position="313"/>
        <end position="318"/>
    </location>
</feature>
<feature type="strand" evidence="7">
    <location>
        <begin position="321"/>
        <end position="323"/>
    </location>
</feature>
<proteinExistence type="evidence at protein level"/>
<organism>
    <name type="scientific">Homo sapiens</name>
    <name type="common">Human</name>
    <dbReference type="NCBI Taxonomy" id="9606"/>
    <lineage>
        <taxon>Eukaryota</taxon>
        <taxon>Metazoa</taxon>
        <taxon>Chordata</taxon>
        <taxon>Craniata</taxon>
        <taxon>Vertebrata</taxon>
        <taxon>Euteleostomi</taxon>
        <taxon>Mammalia</taxon>
        <taxon>Eutheria</taxon>
        <taxon>Euarchontoglires</taxon>
        <taxon>Primates</taxon>
        <taxon>Haplorrhini</taxon>
        <taxon>Catarrhini</taxon>
        <taxon>Hominidae</taxon>
        <taxon>Homo</taxon>
    </lineage>
</organism>
<comment type="function">
    <text evidence="3 4">Guanine nucleotide exchange factor (GEF) for RAP1A, RAP2A and MRAS/M-Ras-GTP. Its association with MRAS inhibits Rap1 activation.</text>
</comment>
<comment type="interaction">
    <interactant intactId="EBI-3921741">
        <id>Q92565</id>
    </interactant>
    <interactant intactId="EBI-2691178">
        <id>Q12955</id>
        <label>ANK3</label>
    </interactant>
    <organismsDiffer>false</organismsDiffer>
    <experiments>2</experiments>
</comment>
<comment type="subcellular location">
    <subcellularLocation>
        <location>Nucleus</location>
    </subcellularLocation>
</comment>
<comment type="alternative products">
    <event type="alternative splicing"/>
    <isoform>
        <id>Q92565-1</id>
        <name>1</name>
        <sequence type="displayed"/>
    </isoform>
    <isoform>
        <id>Q92565-2</id>
        <name>2</name>
        <sequence type="described" ref="VSP_007616"/>
    </isoform>
</comment>
<comment type="tissue specificity">
    <text>Widely expressed with highest levels in brain.</text>
</comment>
<comment type="sequence caution" evidence="6">
    <conflict type="erroneous initiation">
        <sequence resource="EMBL-CDS" id="BAA13406"/>
    </conflict>
</comment>
<sequence length="580" mass="67733">MGSSRLRVFDPHLERKDSAAALSDRELPLPTFDVPYFKYIDEEDEDDEWSSRSQSSTEDDSVDSLLSDRYVVVSGTPEKILEHLLNDLHLEEVQDKETETLLDDFLLTYTVFMTTDDLCQALLRHYSAKKYQGKEENSDVPRRKRKVLHLVSQWIALYKDWLPEDEHSKMFLKTIYRNVLDDVYEYPILEKELKEFQKILGMHRRHTVDEYSPQKKNKALFHQFSLKENWLQHRGTVTETEEIFCHVYITEHSYVSVKAKVSSIAQEILKVVAEKIQYAEEDLALVAITFSGEKHELQPNDLVISKSLEASGRIYVYRKDLADTLNPFAENEESQQRSMRILGMNTWDLALELMNFDWSLFNSIHEQELIYFTFSRQGSGEHTANLSLLLQRCNEVQLWVATEILLCSQLGKRVQLVKKFIKIAAHCKAQRNLNSFFAIVMGLNTASVSRLSQTWEKIPGKFKKLFSELESLTDPSLNHKAYRDAFKKMKPPKIPFMPLLLKDVTFIHEGNKTFLDNLVNFEKLHMIADTVRTLRHCRTNQFGDLSPKEHQELKSYVNHLYVIDSQQALFELSHRIEPRV</sequence>
<name>RPGF5_HUMAN</name>
<dbReference type="EMBL" id="D87467">
    <property type="protein sequence ID" value="BAA13406.2"/>
    <property type="status" value="ALT_INIT"/>
    <property type="molecule type" value="mRNA"/>
</dbReference>
<dbReference type="EMBL" id="CH236948">
    <property type="protein sequence ID" value="EAL24270.1"/>
    <property type="molecule type" value="Genomic_DNA"/>
</dbReference>
<dbReference type="EMBL" id="BC039203">
    <property type="protein sequence ID" value="AAH39203.1"/>
    <property type="molecule type" value="mRNA"/>
</dbReference>
<dbReference type="CCDS" id="CCDS94064.1">
    <molecule id="Q92565-1"/>
</dbReference>
<dbReference type="RefSeq" id="NP_001354529.1">
    <molecule id="Q92565-1"/>
    <property type="nucleotide sequence ID" value="NM_001367600.2"/>
</dbReference>
<dbReference type="RefSeq" id="NP_036426.3">
    <property type="nucleotide sequence ID" value="NM_012294.3"/>
</dbReference>
<dbReference type="PDB" id="1WGY">
    <property type="method" value="NMR"/>
    <property type="chains" value="A=241-331"/>
</dbReference>
<dbReference type="PDBsum" id="1WGY"/>
<dbReference type="BMRB" id="Q92565"/>
<dbReference type="SMR" id="Q92565"/>
<dbReference type="BioGRID" id="115116">
    <property type="interactions" value="40"/>
</dbReference>
<dbReference type="FunCoup" id="Q92565">
    <property type="interactions" value="1470"/>
</dbReference>
<dbReference type="IntAct" id="Q92565">
    <property type="interactions" value="26"/>
</dbReference>
<dbReference type="STRING" id="9606.ENSP00000343656"/>
<dbReference type="iPTMnet" id="Q92565"/>
<dbReference type="PhosphoSitePlus" id="Q92565"/>
<dbReference type="BioMuta" id="RAPGEF5"/>
<dbReference type="DMDM" id="32171396"/>
<dbReference type="jPOST" id="Q92565"/>
<dbReference type="MassIVE" id="Q92565"/>
<dbReference type="PaxDb" id="9606-ENSP00000343656"/>
<dbReference type="PeptideAtlas" id="Q92565"/>
<dbReference type="ProteomicsDB" id="75322">
    <molecule id="Q92565-1"/>
</dbReference>
<dbReference type="ProteomicsDB" id="75323">
    <molecule id="Q92565-2"/>
</dbReference>
<dbReference type="Antibodypedia" id="25491">
    <property type="antibodies" value="233 antibodies from 29 providers"/>
</dbReference>
<dbReference type="DNASU" id="9771"/>
<dbReference type="Ensembl" id="ENST00000401957.6">
    <molecule id="Q92565-1"/>
    <property type="protein sequence ID" value="ENSP00000384044.1"/>
    <property type="gene ID" value="ENSG00000136237.20"/>
</dbReference>
<dbReference type="GeneID" id="9771"/>
<dbReference type="KEGG" id="hsa:9771"/>
<dbReference type="UCSC" id="uc011jym.2">
    <molecule id="Q92565-1"/>
    <property type="organism name" value="human"/>
</dbReference>
<dbReference type="AGR" id="HGNC:16862"/>
<dbReference type="CTD" id="9771"/>
<dbReference type="DisGeNET" id="9771"/>
<dbReference type="GeneCards" id="RAPGEF5"/>
<dbReference type="HGNC" id="HGNC:16862">
    <property type="gene designation" value="RAPGEF5"/>
</dbReference>
<dbReference type="HPA" id="ENSG00000136237">
    <property type="expression patterns" value="Group enriched (brain, parathyroid gland)"/>
</dbReference>
<dbReference type="MIM" id="609527">
    <property type="type" value="gene"/>
</dbReference>
<dbReference type="neXtProt" id="NX_Q92565"/>
<dbReference type="OpenTargets" id="ENSG00000136237"/>
<dbReference type="PharmGKB" id="PA134902361"/>
<dbReference type="VEuPathDB" id="HostDB:ENSG00000136237"/>
<dbReference type="eggNOG" id="KOG2378">
    <property type="taxonomic scope" value="Eukaryota"/>
</dbReference>
<dbReference type="GeneTree" id="ENSGT00940000155137"/>
<dbReference type="HOGENOM" id="CLU_028002_1_0_1"/>
<dbReference type="InParanoid" id="Q92565"/>
<dbReference type="OrthoDB" id="21144at2759"/>
<dbReference type="PAN-GO" id="Q92565">
    <property type="GO annotations" value="4 GO annotations based on evolutionary models"/>
</dbReference>
<dbReference type="PhylomeDB" id="Q92565"/>
<dbReference type="PathwayCommons" id="Q92565"/>
<dbReference type="SignaLink" id="Q92565"/>
<dbReference type="SIGNOR" id="Q92565"/>
<dbReference type="BioGRID-ORCS" id="9771">
    <property type="hits" value="6 hits in 1113 CRISPR screens"/>
</dbReference>
<dbReference type="ChiTaRS" id="RAPGEF5">
    <property type="organism name" value="human"/>
</dbReference>
<dbReference type="EvolutionaryTrace" id="Q92565"/>
<dbReference type="GeneWiki" id="RAPGEF5"/>
<dbReference type="GenomeRNAi" id="9771"/>
<dbReference type="Pharos" id="Q92565">
    <property type="development level" value="Tbio"/>
</dbReference>
<dbReference type="PRO" id="PR:Q92565"/>
<dbReference type="Proteomes" id="UP000005640">
    <property type="component" value="Chromosome 7"/>
</dbReference>
<dbReference type="RNAct" id="Q92565">
    <property type="molecule type" value="protein"/>
</dbReference>
<dbReference type="Bgee" id="ENSG00000136237">
    <property type="expression patterns" value="Expressed in inferior vagus X ganglion and 197 other cell types or tissues"/>
</dbReference>
<dbReference type="ExpressionAtlas" id="Q92565">
    <property type="expression patterns" value="baseline and differential"/>
</dbReference>
<dbReference type="GO" id="GO:0016604">
    <property type="term" value="C:nuclear body"/>
    <property type="evidence" value="ECO:0000314"/>
    <property type="project" value="HPA"/>
</dbReference>
<dbReference type="GO" id="GO:0005654">
    <property type="term" value="C:nucleoplasm"/>
    <property type="evidence" value="ECO:0000314"/>
    <property type="project" value="HPA"/>
</dbReference>
<dbReference type="GO" id="GO:0005634">
    <property type="term" value="C:nucleus"/>
    <property type="evidence" value="ECO:0000314"/>
    <property type="project" value="UniProtKB"/>
</dbReference>
<dbReference type="GO" id="GO:0005886">
    <property type="term" value="C:plasma membrane"/>
    <property type="evidence" value="ECO:0000318"/>
    <property type="project" value="GO_Central"/>
</dbReference>
<dbReference type="GO" id="GO:0030742">
    <property type="term" value="F:GTP-dependent protein binding"/>
    <property type="evidence" value="ECO:0000353"/>
    <property type="project" value="UniProtKB"/>
</dbReference>
<dbReference type="GO" id="GO:0005085">
    <property type="term" value="F:guanyl-nucleotide exchange factor activity"/>
    <property type="evidence" value="ECO:0000314"/>
    <property type="project" value="UniProtKB"/>
</dbReference>
<dbReference type="GO" id="GO:0007399">
    <property type="term" value="P:nervous system development"/>
    <property type="evidence" value="ECO:0000303"/>
    <property type="project" value="UniProtKB"/>
</dbReference>
<dbReference type="GO" id="GO:0007265">
    <property type="term" value="P:Ras protein signal transduction"/>
    <property type="evidence" value="ECO:0000318"/>
    <property type="project" value="GO_Central"/>
</dbReference>
<dbReference type="GO" id="GO:0007264">
    <property type="term" value="P:small GTPase-mediated signal transduction"/>
    <property type="evidence" value="ECO:0000303"/>
    <property type="project" value="UniProtKB"/>
</dbReference>
<dbReference type="CDD" id="cd00155">
    <property type="entry name" value="RasGEF"/>
    <property type="match status" value="1"/>
</dbReference>
<dbReference type="CDD" id="cd06224">
    <property type="entry name" value="REM"/>
    <property type="match status" value="1"/>
</dbReference>
<dbReference type="FunFam" id="3.10.20.90:FF:000163">
    <property type="entry name" value="Rap guanine nucleotide exchange factor (GEF) 5"/>
    <property type="match status" value="1"/>
</dbReference>
<dbReference type="FunFam" id="1.10.840.10:FF:000002">
    <property type="entry name" value="Rap guanine nucleotide exchange factor 4"/>
    <property type="match status" value="1"/>
</dbReference>
<dbReference type="FunFam" id="1.20.870.10:FF:000019">
    <property type="entry name" value="Rap guanine nucleotide exchange factor 5"/>
    <property type="match status" value="1"/>
</dbReference>
<dbReference type="Gene3D" id="3.10.20.90">
    <property type="entry name" value="Phosphatidylinositol 3-kinase Catalytic Subunit, Chain A, domain 1"/>
    <property type="match status" value="1"/>
</dbReference>
<dbReference type="Gene3D" id="1.10.840.10">
    <property type="entry name" value="Ras guanine-nucleotide exchange factors catalytic domain"/>
    <property type="match status" value="1"/>
</dbReference>
<dbReference type="Gene3D" id="1.20.870.10">
    <property type="entry name" value="Son of sevenless (SoS) protein Chain: S domain 1"/>
    <property type="match status" value="1"/>
</dbReference>
<dbReference type="InterPro" id="IPR008937">
    <property type="entry name" value="Ras-like_GEF"/>
</dbReference>
<dbReference type="InterPro" id="IPR000651">
    <property type="entry name" value="Ras-like_Gua-exchang_fac_N"/>
</dbReference>
<dbReference type="InterPro" id="IPR019804">
    <property type="entry name" value="Ras_G-nucl-exch_fac_CS"/>
</dbReference>
<dbReference type="InterPro" id="IPR023578">
    <property type="entry name" value="Ras_GEF_dom_sf"/>
</dbReference>
<dbReference type="InterPro" id="IPR001895">
    <property type="entry name" value="RASGEF_cat_dom"/>
</dbReference>
<dbReference type="InterPro" id="IPR036964">
    <property type="entry name" value="RASGEF_cat_dom_sf"/>
</dbReference>
<dbReference type="InterPro" id="IPR029071">
    <property type="entry name" value="Ubiquitin-like_domsf"/>
</dbReference>
<dbReference type="PANTHER" id="PTHR23113">
    <property type="entry name" value="GUANINE NUCLEOTIDE EXCHANGE FACTOR"/>
    <property type="match status" value="1"/>
</dbReference>
<dbReference type="PANTHER" id="PTHR23113:SF26">
    <property type="entry name" value="RAP GUANINE NUCLEOTIDE EXCHANGE FACTOR 5"/>
    <property type="match status" value="1"/>
</dbReference>
<dbReference type="Pfam" id="PF00617">
    <property type="entry name" value="RasGEF"/>
    <property type="match status" value="1"/>
</dbReference>
<dbReference type="Pfam" id="PF00618">
    <property type="entry name" value="RasGEF_N"/>
    <property type="match status" value="1"/>
</dbReference>
<dbReference type="SMART" id="SM00147">
    <property type="entry name" value="RasGEF"/>
    <property type="match status" value="1"/>
</dbReference>
<dbReference type="SMART" id="SM00229">
    <property type="entry name" value="RasGEFN"/>
    <property type="match status" value="1"/>
</dbReference>
<dbReference type="SUPFAM" id="SSF48366">
    <property type="entry name" value="Ras GEF"/>
    <property type="match status" value="1"/>
</dbReference>
<dbReference type="SUPFAM" id="SSF54236">
    <property type="entry name" value="Ubiquitin-like"/>
    <property type="match status" value="1"/>
</dbReference>
<dbReference type="PROSITE" id="PS00720">
    <property type="entry name" value="RASGEF"/>
    <property type="match status" value="1"/>
</dbReference>
<dbReference type="PROSITE" id="PS50009">
    <property type="entry name" value="RASGEF_CAT"/>
    <property type="match status" value="1"/>
</dbReference>
<dbReference type="PROSITE" id="PS50212">
    <property type="entry name" value="RASGEF_NTER"/>
    <property type="match status" value="1"/>
</dbReference>
<protein>
    <recommendedName>
        <fullName>Rap guanine nucleotide exchange factor 5</fullName>
    </recommendedName>
    <alternativeName>
        <fullName>Guanine nucleotide exchange factor for Rap1</fullName>
    </alternativeName>
    <alternativeName>
        <fullName>M-Ras-regulated Rap GEF</fullName>
        <shortName>MR-GEF</shortName>
    </alternativeName>
    <alternativeName>
        <fullName>Related to Epac</fullName>
        <shortName>Repac</shortName>
    </alternativeName>
</protein>
<evidence type="ECO:0000255" key="1">
    <source>
        <dbReference type="PROSITE-ProRule" id="PRU00135"/>
    </source>
</evidence>
<evidence type="ECO:0000255" key="2">
    <source>
        <dbReference type="PROSITE-ProRule" id="PRU00168"/>
    </source>
</evidence>
<evidence type="ECO:0000269" key="3">
    <source>
    </source>
</evidence>
<evidence type="ECO:0000269" key="4">
    <source>
    </source>
</evidence>
<evidence type="ECO:0000303" key="5">
    <source>
    </source>
</evidence>
<evidence type="ECO:0000305" key="6"/>
<evidence type="ECO:0007829" key="7">
    <source>
        <dbReference type="PDB" id="1WGY"/>
    </source>
</evidence>
<gene>
    <name type="primary">RAPGEF5</name>
    <name type="synonym">GFR</name>
    <name type="synonym">KIAA0277</name>
    <name type="synonym">MRGEF</name>
</gene>
<accession>Q92565</accession>
<accession>A4D140</accession>
<accession>Q8IXU5</accession>